<keyword id="KW-0025">Alternative splicing</keyword>
<keyword id="KW-0072">Autophagy</keyword>
<keyword id="KW-0890">Hereditary spastic paraplegia</keyword>
<keyword id="KW-0523">Neurodegeneration</keyword>
<keyword id="KW-0622">Neuropathy</keyword>
<keyword id="KW-1267">Proteomics identification</keyword>
<keyword id="KW-1185">Reference proteome</keyword>
<keyword id="KW-0677">Repeat</keyword>
<keyword id="KW-0853">WD repeat</keyword>
<comment type="function">
    <text evidence="4">Probably plays a role as positive regulator of autophagy.</text>
</comment>
<comment type="subunit">
    <text evidence="3">Interacts with the ATG8 family members GABARAP, GABARAPL1, GABARAPL2, MAP1LC3B and MAP1LC3C.</text>
</comment>
<comment type="interaction">
    <interactant intactId="EBI-2946991">
        <id>O15040</id>
    </interactant>
    <interactant intactId="EBI-712001">
        <id>O95166</id>
        <label>GABARAP</label>
    </interactant>
    <organismsDiffer>false</organismsDiffer>
    <experiments>2</experiments>
</comment>
<comment type="interaction">
    <interactant intactId="EBI-2946991">
        <id>O15040</id>
    </interactant>
    <interactant intactId="EBI-746969">
        <id>Q9H0R8</id>
        <label>GABARAPL1</label>
    </interactant>
    <organismsDiffer>false</organismsDiffer>
    <experiments>2</experiments>
</comment>
<comment type="interaction">
    <interactant intactId="EBI-2946991">
        <id>O15040</id>
    </interactant>
    <interactant intactId="EBI-720116">
        <id>P60520</id>
        <label>GABARAPL2</label>
    </interactant>
    <organismsDiffer>false</organismsDiffer>
    <experiments>2</experiments>
</comment>
<comment type="interaction">
    <interactant intactId="EBI-2946991">
        <id>O15040</id>
    </interactant>
    <interactant intactId="EBI-2603996">
        <id>Q9BXW4</id>
        <label>MAP1LC3C</label>
    </interactant>
    <organismsDiffer>false</organismsDiffer>
    <experiments>2</experiments>
</comment>
<comment type="alternative products">
    <event type="alternative splicing"/>
    <isoform>
        <id>O15040-1</id>
        <name>1</name>
        <sequence type="displayed"/>
    </isoform>
    <isoform>
        <id>O15040-2</id>
        <name>2</name>
        <sequence type="described" ref="VSP_044793 VSP_044794"/>
    </isoform>
</comment>
<comment type="tissue specificity">
    <text evidence="4">Detected in skin fibroblast (at protein level).</text>
</comment>
<comment type="disease" evidence="4">
    <disease id="DI-03681">
        <name>Neuropathy, hereditary sensory and autonomic, 9, with developmental delay</name>
        <acronym>HSAN9</acronym>
        <description>A form of hereditary sensory and autonomic neuropathy, a genetically and clinically heterogeneous group of disorders characterized by degeneration of dorsal root and autonomic ganglion cells, and by sensory and/or autonomic abnormalities. HSAN9 is characterized by global developmental delay and intellectual disability, axial and appendicular hypotonia, dysarthria, and an abnormal gait that is often described as ataxic. Other features may include peripheral neuropathy, hyporeflexia, and autonomic dysfunction. Affected individuals also have dysmorphic features, thin corpus callosum on brain imaging, and episodes of central apnea, which may be fatal.</description>
        <dbReference type="MIM" id="615031"/>
    </disease>
    <text>The disease is caused by variants affecting the gene represented in this entry.</text>
</comment>
<comment type="similarity">
    <text evidence="7">Belongs to the WD repeat KIAA0329 family.</text>
</comment>
<comment type="sequence caution" evidence="7">
    <conflict type="erroneous initiation">
        <sequence resource="EMBL-CDS" id="BAA20787"/>
    </conflict>
    <text>Extended N-terminus.</text>
</comment>
<reference key="1">
    <citation type="journal article" date="1997" name="DNA Res.">
        <title>Prediction of the coding sequences of unidentified human genes. VII. The complete sequences of 100 new cDNA clones from brain which can code for large proteins in vitro.</title>
        <authorList>
            <person name="Nagase T."/>
            <person name="Ishikawa K."/>
            <person name="Nakajima D."/>
            <person name="Ohira M."/>
            <person name="Seki N."/>
            <person name="Miyajima N."/>
            <person name="Tanaka A."/>
            <person name="Kotani H."/>
            <person name="Nomura N."/>
            <person name="Ohara O."/>
        </authorList>
    </citation>
    <scope>NUCLEOTIDE SEQUENCE [LARGE SCALE MRNA] (ISOFORM 1)</scope>
    <scope>VARIANT ILE-320</scope>
    <source>
        <tissue>Brain</tissue>
    </source>
</reference>
<reference key="2">
    <citation type="journal article" date="2003" name="Nature">
        <title>The DNA sequence and analysis of human chromosome 14.</title>
        <authorList>
            <person name="Heilig R."/>
            <person name="Eckenberg R."/>
            <person name="Petit J.-L."/>
            <person name="Fonknechten N."/>
            <person name="Da Silva C."/>
            <person name="Cattolico L."/>
            <person name="Levy M."/>
            <person name="Barbe V."/>
            <person name="De Berardinis V."/>
            <person name="Ureta-Vidal A."/>
            <person name="Pelletier E."/>
            <person name="Vico V."/>
            <person name="Anthouard V."/>
            <person name="Rowen L."/>
            <person name="Madan A."/>
            <person name="Qin S."/>
            <person name="Sun H."/>
            <person name="Du H."/>
            <person name="Pepin K."/>
            <person name="Artiguenave F."/>
            <person name="Robert C."/>
            <person name="Cruaud C."/>
            <person name="Bruels T."/>
            <person name="Jaillon O."/>
            <person name="Friedlander L."/>
            <person name="Samson G."/>
            <person name="Brottier P."/>
            <person name="Cure S."/>
            <person name="Segurens B."/>
            <person name="Aniere F."/>
            <person name="Samain S."/>
            <person name="Crespeau H."/>
            <person name="Abbasi N."/>
            <person name="Aiach N."/>
            <person name="Boscus D."/>
            <person name="Dickhoff R."/>
            <person name="Dors M."/>
            <person name="Dubois I."/>
            <person name="Friedman C."/>
            <person name="Gouyvenoux M."/>
            <person name="James R."/>
            <person name="Madan A."/>
            <person name="Mairey-Estrada B."/>
            <person name="Mangenot S."/>
            <person name="Martins N."/>
            <person name="Menard M."/>
            <person name="Oztas S."/>
            <person name="Ratcliffe A."/>
            <person name="Shaffer T."/>
            <person name="Trask B."/>
            <person name="Vacherie B."/>
            <person name="Bellemere C."/>
            <person name="Belser C."/>
            <person name="Besnard-Gonnet M."/>
            <person name="Bartol-Mavel D."/>
            <person name="Boutard M."/>
            <person name="Briez-Silla S."/>
            <person name="Combette S."/>
            <person name="Dufosse-Laurent V."/>
            <person name="Ferron C."/>
            <person name="Lechaplais C."/>
            <person name="Louesse C."/>
            <person name="Muselet D."/>
            <person name="Magdelenat G."/>
            <person name="Pateau E."/>
            <person name="Petit E."/>
            <person name="Sirvain-Trukniewicz P."/>
            <person name="Trybou A."/>
            <person name="Vega-Czarny N."/>
            <person name="Bataille E."/>
            <person name="Bluet E."/>
            <person name="Bordelais I."/>
            <person name="Dubois M."/>
            <person name="Dumont C."/>
            <person name="Guerin T."/>
            <person name="Haffray S."/>
            <person name="Hammadi R."/>
            <person name="Muanga J."/>
            <person name="Pellouin V."/>
            <person name="Robert D."/>
            <person name="Wunderle E."/>
            <person name="Gauguet G."/>
            <person name="Roy A."/>
            <person name="Sainte-Marthe L."/>
            <person name="Verdier J."/>
            <person name="Verdier-Discala C."/>
            <person name="Hillier L.W."/>
            <person name="Fulton L."/>
            <person name="McPherson J."/>
            <person name="Matsuda F."/>
            <person name="Wilson R."/>
            <person name="Scarpelli C."/>
            <person name="Gyapay G."/>
            <person name="Wincker P."/>
            <person name="Saurin W."/>
            <person name="Quetier F."/>
            <person name="Waterston R."/>
            <person name="Hood L."/>
            <person name="Weissenbach J."/>
        </authorList>
    </citation>
    <scope>NUCLEOTIDE SEQUENCE [LARGE SCALE GENOMIC DNA]</scope>
</reference>
<reference key="3">
    <citation type="submission" date="2005-07" db="EMBL/GenBank/DDBJ databases">
        <authorList>
            <person name="Mural R.J."/>
            <person name="Istrail S."/>
            <person name="Sutton G.G."/>
            <person name="Florea L."/>
            <person name="Halpern A.L."/>
            <person name="Mobarry C.M."/>
            <person name="Lippert R."/>
            <person name="Walenz B."/>
            <person name="Shatkay H."/>
            <person name="Dew I."/>
            <person name="Miller J.R."/>
            <person name="Flanigan M.J."/>
            <person name="Edwards N.J."/>
            <person name="Bolanos R."/>
            <person name="Fasulo D."/>
            <person name="Halldorsson B.V."/>
            <person name="Hannenhalli S."/>
            <person name="Turner R."/>
            <person name="Yooseph S."/>
            <person name="Lu F."/>
            <person name="Nusskern D.R."/>
            <person name="Shue B.C."/>
            <person name="Zheng X.H."/>
            <person name="Zhong F."/>
            <person name="Delcher A.L."/>
            <person name="Huson D.H."/>
            <person name="Kravitz S.A."/>
            <person name="Mouchard L."/>
            <person name="Reinert K."/>
            <person name="Remington K.A."/>
            <person name="Clark A.G."/>
            <person name="Waterman M.S."/>
            <person name="Eichler E.E."/>
            <person name="Adams M.D."/>
            <person name="Hunkapiller M.W."/>
            <person name="Myers E.W."/>
            <person name="Venter J.C."/>
        </authorList>
    </citation>
    <scope>NUCLEOTIDE SEQUENCE [LARGE SCALE GENOMIC DNA]</scope>
</reference>
<reference key="4">
    <citation type="journal article" date="2004" name="Genome Res.">
        <title>The status, quality, and expansion of the NIH full-length cDNA project: the Mammalian Gene Collection (MGC).</title>
        <authorList>
            <consortium name="The MGC Project Team"/>
        </authorList>
    </citation>
    <scope>NUCLEOTIDE SEQUENCE [LARGE SCALE MRNA] (ISOFORMS 1 AND 2)</scope>
    <scope>VARIANT ILE-320</scope>
</reference>
<reference key="5">
    <citation type="journal article" date="2008" name="Proc. Natl. Acad. Sci. U.S.A.">
        <title>A quantitative atlas of mitotic phosphorylation.</title>
        <authorList>
            <person name="Dephoure N."/>
            <person name="Zhou C."/>
            <person name="Villen J."/>
            <person name="Beausoleil S.A."/>
            <person name="Bakalarski C.E."/>
            <person name="Elledge S.J."/>
            <person name="Gygi S.P."/>
        </authorList>
    </citation>
    <scope>IDENTIFICATION BY MASS SPECTROMETRY [LARGE SCALE ANALYSIS]</scope>
    <source>
        <tissue>Cervix carcinoma</tissue>
    </source>
</reference>
<reference key="6">
    <citation type="journal article" date="2010" name="Nature">
        <title>Network organization of the human autophagy system.</title>
        <authorList>
            <person name="Behrends C."/>
            <person name="Sowa M.E."/>
            <person name="Gygi S.P."/>
            <person name="Harper J.W."/>
        </authorList>
    </citation>
    <scope>INTERACTION WITH GABARAP; GABARAPL1; GABARAPL2; MAP1LC3B AND MAP1LC3C</scope>
</reference>
<reference key="7">
    <citation type="journal article" date="2012" name="Am. J. Hum. Genet.">
        <title>Mutation in TECPR2 reveals a role for autophagy in hereditary spastic paraparesis.</title>
        <authorList>
            <person name="Oz-Levi D."/>
            <person name="Ben-Zeev B."/>
            <person name="Ruzzo E.K."/>
            <person name="Hitomi Y."/>
            <person name="Gelman A."/>
            <person name="Pelak K."/>
            <person name="Anikster Y."/>
            <person name="Reznik-Wolf H."/>
            <person name="Bar-Joseph I."/>
            <person name="Olender T."/>
            <person name="Alkelai A."/>
            <person name="Weiss M."/>
            <person name="Ben-Asher E."/>
            <person name="Ge D."/>
            <person name="Shianna K.V."/>
            <person name="Elazar Z."/>
            <person name="Goldstein D.B."/>
            <person name="Pras E."/>
            <person name="Lancet D."/>
        </authorList>
    </citation>
    <scope>INVOLVEMENT IN HSAN9</scope>
    <scope>FUNCTION IN AUTOPHAGY REGULATION</scope>
    <scope>TISSUE SPECIFICITY</scope>
</reference>
<sequence length="1411" mass="153848">MASISEPVTFREFCPLYYLLNAIPTKIQKGFRSIVVYLTALDTNGDYIAVGSSIGMLYLYCRHLNQMRKYNFEGKTESITVVKLLSCFDDLVAAGTASGRVAVFQLVSSLPGRNKQLRRFDVTGIHKNSITALAWSPNGMKLFSGDDKGKIVYSSLDLDQGLCNSQLVLEEPSSIVQLDYSQKVLLVSTLQRSLLFYTEEKSVRQIGTQPRKSTGKFGACFIPGLCKQSDLTLYASRPGLRLWKADVHGTVQATFILKDAFAGGVKPFELHPRLESPNSGSCSLPERHLGLVSCFFQEGWVLSWNEYSIYLLDTVNQATVAGLEGSGDIVSVSCTENEIFFLKGDRNIIRISSRPEGLTSTVRDGLEMSGCSERVHVQQAEKLPGATVSETRLRGSSMASSVASEPRSRSSSLNSTDSGSGLLPPGLQATPELGKGSQPLSQRFNAISSEDFDQELVVKPIKVKRKKKKKKTEGGSRSTCHSSLESTPCSEFPGDSPQSLNTDLLSMTSSVLGSSVDQLSAESPDQESSFNGEVNGVPQENTDPETFNVLEVSGSMPDSLAEEDDIRTEMPHCHHAHGRELLNGAREDVGGSDVTGLGDEPCPADDGPNSTQLPFQEQDSSPGAHDGEDIQPIGPQSTFCEVPLLNSLTVPSSLSWAPSAEQWLPGTRADEGSPVEPSQEQDILTSMEASGHLSTNLWHAVTDDDTGQKEIPISERVLGSVGGQLTPVSALAASTHKPWLEQPPRDQTLTSSDEEDIYAHGLPSSSSETSVTELGPSCSQQDLSRLGAEDAGLLKPDQFAESWMGYSGPGYGILSLVVSEKYIWCLDYKGGLFCSALPGAGLRWQKFEDAVQQVAVSPSGALLWKIEQKSNRAFACGKVTIKGKRHWYEALPQAVFVALSDDTAWIIRTSGDLYLQTGLSVDRPCARAVKVDCPYPLSQITARNNVVWALTEQRALLYREGVSSFCPEGEQWKCDIVSERQALEPVCITLGDQQTLWALDIHGNLWFRTGIISKKPQGDDDHWWQVSITDYVVFDQCSLFQTIIHATHSVATAAQAPVEKVADKLRMAFWSQQLQCQPSLLGVNNSGVWISSGKNEFHVAKGSLIGTYWNHVVPRGTASATKWAFVLASAAPTKEGSFLWLCQSSKDLCSVSAQSAQSRPSTVQLPPEAEMRAYAACQDALWALDSLGQVFIRTLSKSCPTGMHWTRLDLSQLGAVKLTSLACGNQHIWACDSRGGVYFRVGTQPLNPSLMLPAWIMIEPPVQPAGVSLVSVHSSPNDQMLWVLDSRWNVHVRTGITEEMPVGTAWEHVPGLQACQLALSTRTVWARCPNGDLARRYGVTDKNPAGDYWKKIPGSVSCFTVTASDELWAVGPPGYLLQRLTKTFSHSHGTQKSSQAAMPHPEDLEDEWEVI</sequence>
<name>TCPR2_HUMAN</name>
<feature type="chain" id="PRO_0000050747" description="Tectonin beta-propeller repeat-containing protein 2">
    <location>
        <begin position="1"/>
        <end position="1411"/>
    </location>
</feature>
<feature type="repeat" description="WD 1">
    <location>
        <begin position="23"/>
        <end position="66"/>
    </location>
</feature>
<feature type="repeat" description="WD 2">
    <location>
        <begin position="67"/>
        <end position="114"/>
    </location>
</feature>
<feature type="repeat" description="WD 3">
    <location>
        <begin position="115"/>
        <end position="161"/>
    </location>
</feature>
<feature type="repeat" description="WD 4">
    <location>
        <begin position="162"/>
        <end position="203"/>
    </location>
</feature>
<feature type="repeat" description="WD 5">
    <location>
        <begin position="204"/>
        <end position="265"/>
    </location>
</feature>
<feature type="repeat" description="WD 6">
    <location>
        <begin position="266"/>
        <end position="309"/>
    </location>
</feature>
<feature type="repeat" description="WD 7">
    <location>
        <begin position="310"/>
        <end position="343"/>
    </location>
</feature>
<feature type="repeat" description="TECPR 1">
    <location>
        <begin position="945"/>
        <end position="976"/>
    </location>
</feature>
<feature type="repeat" description="TECPR 2">
    <location>
        <begin position="994"/>
        <end position="1027"/>
    </location>
</feature>
<feature type="repeat" description="TECPR 3">
    <location>
        <begin position="1179"/>
        <end position="1209"/>
    </location>
</feature>
<feature type="repeat" description="TECPR 4">
    <location>
        <begin position="1226"/>
        <end position="1259"/>
    </location>
</feature>
<feature type="repeat" description="TECPR 5">
    <location>
        <begin position="1279"/>
        <end position="1310"/>
    </location>
</feature>
<feature type="repeat" description="TECPR 6">
    <location>
        <begin position="1322"/>
        <end position="1353"/>
    </location>
</feature>
<feature type="region of interest" description="Disordered" evidence="1">
    <location>
        <begin position="379"/>
        <end position="439"/>
    </location>
</feature>
<feature type="region of interest" description="Disordered" evidence="1">
    <location>
        <begin position="463"/>
        <end position="542"/>
    </location>
</feature>
<feature type="region of interest" description="Disordered" evidence="1">
    <location>
        <begin position="579"/>
        <end position="637"/>
    </location>
</feature>
<feature type="region of interest" description="Disordered" evidence="1">
    <location>
        <begin position="758"/>
        <end position="779"/>
    </location>
</feature>
<feature type="region of interest" description="Disordered" evidence="1">
    <location>
        <begin position="1388"/>
        <end position="1411"/>
    </location>
</feature>
<feature type="compositionally biased region" description="Low complexity" evidence="1">
    <location>
        <begin position="400"/>
        <end position="420"/>
    </location>
</feature>
<feature type="compositionally biased region" description="Polar residues" evidence="1">
    <location>
        <begin position="475"/>
        <end position="489"/>
    </location>
</feature>
<feature type="compositionally biased region" description="Polar residues" evidence="1">
    <location>
        <begin position="496"/>
        <end position="542"/>
    </location>
</feature>
<feature type="compositionally biased region" description="Polar residues" evidence="1">
    <location>
        <begin position="608"/>
        <end position="621"/>
    </location>
</feature>
<feature type="compositionally biased region" description="Polar residues" evidence="1">
    <location>
        <begin position="763"/>
        <end position="779"/>
    </location>
</feature>
<feature type="splice variant" id="VSP_044793" description="In isoform 2." evidence="6">
    <original>PAGV</original>
    <variation>VSRS</variation>
    <location>
        <begin position="1264"/>
        <end position="1267"/>
    </location>
</feature>
<feature type="splice variant" id="VSP_044794" description="In isoform 2." evidence="6">
    <location>
        <begin position="1268"/>
        <end position="1411"/>
    </location>
</feature>
<feature type="sequence variant" id="VAR_046529" description="In dbSNP:rs1309353." evidence="2 5">
    <original>V</original>
    <variation>I</variation>
    <location>
        <position position="320"/>
    </location>
</feature>
<feature type="sequence variant" id="VAR_046530" description="In dbSNP:rs11845676.">
    <original>A</original>
    <variation>T</variation>
    <location>
        <position position="386"/>
    </location>
</feature>
<feature type="sequence variant" id="VAR_046531" description="In dbSNP:rs2273906.">
    <original>P</original>
    <variation>S</variation>
    <location>
        <position position="439"/>
    </location>
</feature>
<feature type="sequence variant" id="VAR_046532" description="In dbSNP:rs10149146.">
    <original>I</original>
    <variation>V</variation>
    <location>
        <position position="683"/>
    </location>
</feature>
<feature type="sequence conflict" description="In Ref. 4; AAI42668/AAI42716." evidence="7" ref="4">
    <original>Y</original>
    <variation>H</variation>
    <location>
        <position position="60"/>
    </location>
</feature>
<dbReference type="EMBL" id="AB002295">
    <property type="protein sequence ID" value="BAA20757.1"/>
    <property type="molecule type" value="mRNA"/>
</dbReference>
<dbReference type="EMBL" id="AB002327">
    <property type="protein sequence ID" value="BAA20787.2"/>
    <property type="status" value="ALT_INIT"/>
    <property type="molecule type" value="mRNA"/>
</dbReference>
<dbReference type="EMBL" id="AL137229">
    <property type="status" value="NOT_ANNOTATED_CDS"/>
    <property type="molecule type" value="Genomic_DNA"/>
</dbReference>
<dbReference type="EMBL" id="AL136293">
    <property type="status" value="NOT_ANNOTATED_CDS"/>
    <property type="molecule type" value="Genomic_DNA"/>
</dbReference>
<dbReference type="EMBL" id="CH471061">
    <property type="protein sequence ID" value="EAW81789.1"/>
    <property type="molecule type" value="Genomic_DNA"/>
</dbReference>
<dbReference type="EMBL" id="BC136647">
    <property type="protein sequence ID" value="AAI36648.1"/>
    <property type="molecule type" value="mRNA"/>
</dbReference>
<dbReference type="EMBL" id="BC142667">
    <property type="protein sequence ID" value="AAI42668.1"/>
    <property type="molecule type" value="mRNA"/>
</dbReference>
<dbReference type="EMBL" id="BC142715">
    <property type="protein sequence ID" value="AAI42716.1"/>
    <property type="molecule type" value="mRNA"/>
</dbReference>
<dbReference type="EMBL" id="BC151230">
    <property type="protein sequence ID" value="AAI51231.1"/>
    <property type="molecule type" value="mRNA"/>
</dbReference>
<dbReference type="CCDS" id="CCDS32162.1">
    <molecule id="O15040-1"/>
</dbReference>
<dbReference type="CCDS" id="CCDS58337.1">
    <molecule id="O15040-2"/>
</dbReference>
<dbReference type="RefSeq" id="NP_001166102.1">
    <molecule id="O15040-2"/>
    <property type="nucleotide sequence ID" value="NM_001172631.3"/>
</dbReference>
<dbReference type="RefSeq" id="NP_055659.2">
    <molecule id="O15040-1"/>
    <property type="nucleotide sequence ID" value="NM_014844.5"/>
</dbReference>
<dbReference type="SMR" id="O15040"/>
<dbReference type="BioGRID" id="115224">
    <property type="interactions" value="17"/>
</dbReference>
<dbReference type="FunCoup" id="O15040">
    <property type="interactions" value="599"/>
</dbReference>
<dbReference type="IntAct" id="O15040">
    <property type="interactions" value="15"/>
</dbReference>
<dbReference type="MINT" id="O15040"/>
<dbReference type="STRING" id="9606.ENSP00000352510"/>
<dbReference type="GlyCosmos" id="O15040">
    <property type="glycosylation" value="1 site, 1 glycan"/>
</dbReference>
<dbReference type="GlyGen" id="O15040">
    <property type="glycosylation" value="1 site, 1 O-linked glycan (1 site)"/>
</dbReference>
<dbReference type="iPTMnet" id="O15040"/>
<dbReference type="PhosphoSitePlus" id="O15040"/>
<dbReference type="SwissPalm" id="O15040"/>
<dbReference type="BioMuta" id="TECPR2"/>
<dbReference type="jPOST" id="O15040"/>
<dbReference type="MassIVE" id="O15040"/>
<dbReference type="PaxDb" id="9606-ENSP00000352510"/>
<dbReference type="PeptideAtlas" id="O15040"/>
<dbReference type="ProteomicsDB" id="40302"/>
<dbReference type="ProteomicsDB" id="48395">
    <molecule id="O15040-1"/>
</dbReference>
<dbReference type="Pumba" id="O15040"/>
<dbReference type="Antibodypedia" id="64">
    <property type="antibodies" value="35 antibodies from 11 providers"/>
</dbReference>
<dbReference type="DNASU" id="9895"/>
<dbReference type="Ensembl" id="ENST00000359520.12">
    <molecule id="O15040-1"/>
    <property type="protein sequence ID" value="ENSP00000352510.7"/>
    <property type="gene ID" value="ENSG00000196663.16"/>
</dbReference>
<dbReference type="Ensembl" id="ENST00000558678.1">
    <molecule id="O15040-2"/>
    <property type="protein sequence ID" value="ENSP00000453671.1"/>
    <property type="gene ID" value="ENSG00000196663.16"/>
</dbReference>
<dbReference type="GeneID" id="9895"/>
<dbReference type="KEGG" id="hsa:9895"/>
<dbReference type="MANE-Select" id="ENST00000359520.12">
    <property type="protein sequence ID" value="ENSP00000352510.7"/>
    <property type="RefSeq nucleotide sequence ID" value="NM_014844.5"/>
    <property type="RefSeq protein sequence ID" value="NP_055659.2"/>
</dbReference>
<dbReference type="UCSC" id="uc001ylw.2">
    <molecule id="O15040-1"/>
    <property type="organism name" value="human"/>
</dbReference>
<dbReference type="AGR" id="HGNC:19957"/>
<dbReference type="CTD" id="9895"/>
<dbReference type="DisGeNET" id="9895"/>
<dbReference type="GeneCards" id="TECPR2"/>
<dbReference type="GeneReviews" id="TECPR2"/>
<dbReference type="HGNC" id="HGNC:19957">
    <property type="gene designation" value="TECPR2"/>
</dbReference>
<dbReference type="HPA" id="ENSG00000196663">
    <property type="expression patterns" value="Low tissue specificity"/>
</dbReference>
<dbReference type="MalaCards" id="TECPR2"/>
<dbReference type="MIM" id="615000">
    <property type="type" value="gene"/>
</dbReference>
<dbReference type="MIM" id="615031">
    <property type="type" value="phenotype"/>
</dbReference>
<dbReference type="neXtProt" id="NX_O15040"/>
<dbReference type="OpenTargets" id="ENSG00000196663"/>
<dbReference type="Orphanet" id="320385">
    <property type="disease" value="Hereditary sensory and autonomic neuropathy due to TECPR2 mutation"/>
</dbReference>
<dbReference type="PharmGKB" id="PA164726437"/>
<dbReference type="VEuPathDB" id="HostDB:ENSG00000196663"/>
<dbReference type="eggNOG" id="KOG3621">
    <property type="taxonomic scope" value="Eukaryota"/>
</dbReference>
<dbReference type="eggNOG" id="KOG3669">
    <property type="taxonomic scope" value="Eukaryota"/>
</dbReference>
<dbReference type="GeneTree" id="ENSGT00940000157283"/>
<dbReference type="HOGENOM" id="CLU_005841_0_0_1"/>
<dbReference type="InParanoid" id="O15040"/>
<dbReference type="OMA" id="WFRTGVC"/>
<dbReference type="OrthoDB" id="9930272at2759"/>
<dbReference type="PAN-GO" id="O15040">
    <property type="GO annotations" value="1 GO annotation based on evolutionary models"/>
</dbReference>
<dbReference type="PhylomeDB" id="O15040"/>
<dbReference type="TreeFam" id="TF323607"/>
<dbReference type="PathwayCommons" id="O15040"/>
<dbReference type="SignaLink" id="O15040"/>
<dbReference type="BioGRID-ORCS" id="9895">
    <property type="hits" value="13 hits in 1143 CRISPR screens"/>
</dbReference>
<dbReference type="ChiTaRS" id="TECPR2">
    <property type="organism name" value="human"/>
</dbReference>
<dbReference type="GenomeRNAi" id="9895"/>
<dbReference type="Pharos" id="O15040">
    <property type="development level" value="Tbio"/>
</dbReference>
<dbReference type="PRO" id="PR:O15040"/>
<dbReference type="Proteomes" id="UP000005640">
    <property type="component" value="Chromosome 14"/>
</dbReference>
<dbReference type="RNAct" id="O15040">
    <property type="molecule type" value="protein"/>
</dbReference>
<dbReference type="Bgee" id="ENSG00000196663">
    <property type="expression patterns" value="Expressed in secondary oocyte and 177 other cell types or tissues"/>
</dbReference>
<dbReference type="GO" id="GO:0005737">
    <property type="term" value="C:cytoplasm"/>
    <property type="evidence" value="ECO:0007669"/>
    <property type="project" value="GOC"/>
</dbReference>
<dbReference type="GO" id="GO:0006914">
    <property type="term" value="P:autophagy"/>
    <property type="evidence" value="ECO:0007669"/>
    <property type="project" value="UniProtKB-KW"/>
</dbReference>
<dbReference type="GO" id="GO:0032527">
    <property type="term" value="P:protein exit from endoplasmic reticulum"/>
    <property type="evidence" value="ECO:0000315"/>
    <property type="project" value="CACAO"/>
</dbReference>
<dbReference type="Gene3D" id="2.130.10.10">
    <property type="entry name" value="YVTN repeat-like/Quinoprotein amine dehydrogenase"/>
    <property type="match status" value="1"/>
</dbReference>
<dbReference type="InterPro" id="IPR056499">
    <property type="entry name" value="Beta-prop_HPS5-like"/>
</dbReference>
<dbReference type="InterPro" id="IPR006624">
    <property type="entry name" value="Beta-propeller_rpt_TECPR"/>
</dbReference>
<dbReference type="InterPro" id="IPR009091">
    <property type="entry name" value="RCC1/BLIP-II"/>
</dbReference>
<dbReference type="InterPro" id="IPR015943">
    <property type="entry name" value="WD40/YVTN_repeat-like_dom_sf"/>
</dbReference>
<dbReference type="InterPro" id="IPR036322">
    <property type="entry name" value="WD40_repeat_dom_sf"/>
</dbReference>
<dbReference type="InterPro" id="IPR001680">
    <property type="entry name" value="WD40_rpt"/>
</dbReference>
<dbReference type="PANTHER" id="PTHR23287">
    <property type="entry name" value="RUBY-EYE2-LIKE PROTEIN"/>
    <property type="match status" value="1"/>
</dbReference>
<dbReference type="PANTHER" id="PTHR23287:SF16">
    <property type="entry name" value="TECTONIN BETA-PROPELLER REPEAT-CONTAINING PROTEIN 2"/>
    <property type="match status" value="1"/>
</dbReference>
<dbReference type="Pfam" id="PF23756">
    <property type="entry name" value="Beta-prop_HPS5"/>
    <property type="match status" value="1"/>
</dbReference>
<dbReference type="Pfam" id="PF06462">
    <property type="entry name" value="Hyd_WA"/>
    <property type="match status" value="2"/>
</dbReference>
<dbReference type="Pfam" id="PF19193">
    <property type="entry name" value="Tectonin"/>
    <property type="match status" value="1"/>
</dbReference>
<dbReference type="SMART" id="SM00706">
    <property type="entry name" value="TECPR"/>
    <property type="match status" value="10"/>
</dbReference>
<dbReference type="SMART" id="SM00320">
    <property type="entry name" value="WD40"/>
    <property type="match status" value="3"/>
</dbReference>
<dbReference type="SUPFAM" id="SSF50985">
    <property type="entry name" value="RCC1/BLIP-II"/>
    <property type="match status" value="1"/>
</dbReference>
<dbReference type="SUPFAM" id="SSF50978">
    <property type="entry name" value="WD40 repeat-like"/>
    <property type="match status" value="1"/>
</dbReference>
<protein>
    <recommendedName>
        <fullName>Tectonin beta-propeller repeat-containing protein 2</fullName>
    </recommendedName>
    <alternativeName>
        <fullName>WD repeat-containing protein KIAA0329/KIAA0297</fullName>
    </alternativeName>
</protein>
<accession>O15040</accession>
<accession>A5PKY3</accession>
<accession>A6NFY9</accession>
<accession>A7E2X3</accession>
<accession>H0YMM9</accession>
<accession>Q9UEG6</accession>
<evidence type="ECO:0000256" key="1">
    <source>
        <dbReference type="SAM" id="MobiDB-lite"/>
    </source>
</evidence>
<evidence type="ECO:0000269" key="2">
    <source>
    </source>
</evidence>
<evidence type="ECO:0000269" key="3">
    <source>
    </source>
</evidence>
<evidence type="ECO:0000269" key="4">
    <source>
    </source>
</evidence>
<evidence type="ECO:0000269" key="5">
    <source>
    </source>
</evidence>
<evidence type="ECO:0000303" key="6">
    <source>
    </source>
</evidence>
<evidence type="ECO:0000305" key="7"/>
<organism>
    <name type="scientific">Homo sapiens</name>
    <name type="common">Human</name>
    <dbReference type="NCBI Taxonomy" id="9606"/>
    <lineage>
        <taxon>Eukaryota</taxon>
        <taxon>Metazoa</taxon>
        <taxon>Chordata</taxon>
        <taxon>Craniata</taxon>
        <taxon>Vertebrata</taxon>
        <taxon>Euteleostomi</taxon>
        <taxon>Mammalia</taxon>
        <taxon>Eutheria</taxon>
        <taxon>Euarchontoglires</taxon>
        <taxon>Primates</taxon>
        <taxon>Haplorrhini</taxon>
        <taxon>Catarrhini</taxon>
        <taxon>Hominidae</taxon>
        <taxon>Homo</taxon>
    </lineage>
</organism>
<proteinExistence type="evidence at protein level"/>
<gene>
    <name type="primary">TECPR2</name>
    <name type="synonym">KIAA0297</name>
    <name type="synonym">KIAA0329</name>
</gene>